<dbReference type="EMBL" id="L08602">
    <property type="protein sequence ID" value="AAA16322.1"/>
    <property type="molecule type" value="Unassigned_DNA"/>
</dbReference>
<dbReference type="PIR" id="I50475">
    <property type="entry name" value="I50475"/>
</dbReference>
<dbReference type="SMR" id="P35406"/>
<dbReference type="BindingDB" id="P35406"/>
<dbReference type="ChEMBL" id="CHEMBL2368"/>
<dbReference type="Proteomes" id="UP000515129">
    <property type="component" value="Unplaced"/>
</dbReference>
<dbReference type="GO" id="GO:0060170">
    <property type="term" value="C:ciliary membrane"/>
    <property type="evidence" value="ECO:0007669"/>
    <property type="project" value="UniProtKB-SubCell"/>
</dbReference>
<dbReference type="GO" id="GO:0045202">
    <property type="term" value="C:synapse"/>
    <property type="evidence" value="ECO:0007669"/>
    <property type="project" value="GOC"/>
</dbReference>
<dbReference type="GO" id="GO:0004938">
    <property type="term" value="F:alpha2-adrenergic receptor activity"/>
    <property type="evidence" value="ECO:0007669"/>
    <property type="project" value="UniProtKB-ARBA"/>
</dbReference>
<dbReference type="GO" id="GO:0001588">
    <property type="term" value="F:dopamine neurotransmitter receptor activity, coupled via Gs"/>
    <property type="evidence" value="ECO:0007669"/>
    <property type="project" value="TreeGrafter"/>
</dbReference>
<dbReference type="GO" id="GO:0071880">
    <property type="term" value="P:adenylate cyclase-activating adrenergic receptor signaling pathway"/>
    <property type="evidence" value="ECO:0007669"/>
    <property type="project" value="TreeGrafter"/>
</dbReference>
<dbReference type="GO" id="GO:0071881">
    <property type="term" value="P:adenylate cyclase-inhibiting adrenergic receptor signaling pathway"/>
    <property type="evidence" value="ECO:0007669"/>
    <property type="project" value="UniProtKB-ARBA"/>
</dbReference>
<dbReference type="GO" id="GO:0043410">
    <property type="term" value="P:positive regulation of MAPK cascade"/>
    <property type="evidence" value="ECO:0007669"/>
    <property type="project" value="TreeGrafter"/>
</dbReference>
<dbReference type="FunFam" id="1.20.1070.10:FF:000045">
    <property type="entry name" value="D(1A) dopamine receptor"/>
    <property type="match status" value="1"/>
</dbReference>
<dbReference type="Gene3D" id="1.20.1070.10">
    <property type="entry name" value="Rhodopsin 7-helix transmembrane proteins"/>
    <property type="match status" value="1"/>
</dbReference>
<dbReference type="InterPro" id="IPR000929">
    <property type="entry name" value="Dopamine_rcpt"/>
</dbReference>
<dbReference type="InterPro" id="IPR000276">
    <property type="entry name" value="GPCR_Rhodpsn"/>
</dbReference>
<dbReference type="InterPro" id="IPR017452">
    <property type="entry name" value="GPCR_Rhodpsn_7TM"/>
</dbReference>
<dbReference type="PANTHER" id="PTHR24248">
    <property type="entry name" value="ADRENERGIC RECEPTOR-RELATED G-PROTEIN COUPLED RECEPTOR"/>
    <property type="match status" value="1"/>
</dbReference>
<dbReference type="PANTHER" id="PTHR24248:SF139">
    <property type="entry name" value="D(1A) DOPAMINE RECEPTOR"/>
    <property type="match status" value="1"/>
</dbReference>
<dbReference type="Pfam" id="PF00001">
    <property type="entry name" value="7tm_1"/>
    <property type="match status" value="1"/>
</dbReference>
<dbReference type="PRINTS" id="PR00242">
    <property type="entry name" value="DOPAMINER"/>
</dbReference>
<dbReference type="PRINTS" id="PR00237">
    <property type="entry name" value="GPCRRHODOPSN"/>
</dbReference>
<dbReference type="SMART" id="SM01381">
    <property type="entry name" value="7TM_GPCR_Srsx"/>
    <property type="match status" value="1"/>
</dbReference>
<dbReference type="SUPFAM" id="SSF81321">
    <property type="entry name" value="Family A G protein-coupled receptor-like"/>
    <property type="match status" value="1"/>
</dbReference>
<dbReference type="PROSITE" id="PS00237">
    <property type="entry name" value="G_PROTEIN_RECEP_F1_1"/>
    <property type="match status" value="1"/>
</dbReference>
<dbReference type="PROSITE" id="PS50262">
    <property type="entry name" value="G_PROTEIN_RECEP_F1_2"/>
    <property type="match status" value="1"/>
</dbReference>
<keyword id="KW-1003">Cell membrane</keyword>
<keyword id="KW-0966">Cell projection</keyword>
<keyword id="KW-1015">Disulfide bond</keyword>
<keyword id="KW-0297">G-protein coupled receptor</keyword>
<keyword id="KW-0325">Glycoprotein</keyword>
<keyword id="KW-0449">Lipoprotein</keyword>
<keyword id="KW-0472">Membrane</keyword>
<keyword id="KW-0564">Palmitate</keyword>
<keyword id="KW-0675">Receptor</keyword>
<keyword id="KW-1185">Reference proteome</keyword>
<keyword id="KW-0807">Transducer</keyword>
<keyword id="KW-0812">Transmembrane</keyword>
<keyword id="KW-1133">Transmembrane helix</keyword>
<accession>P35406</accession>
<name>DRD1_CARAU</name>
<comment type="function">
    <text>Dopamine receptor whose activity is mediated by G proteins which activate adenylyl cyclase. Could be involved in growth hormone release.</text>
</comment>
<comment type="subcellular location">
    <subcellularLocation>
        <location>Cell membrane</location>
        <topology>Multi-pass membrane protein</topology>
    </subcellularLocation>
    <subcellularLocation>
        <location evidence="2">Cell projection</location>
        <location evidence="2">Cilium membrane</location>
        <topology evidence="3">Multi-pass membrane protein</topology>
    </subcellularLocation>
</comment>
<comment type="tissue specificity">
    <text>Retina.</text>
</comment>
<comment type="similarity">
    <text evidence="4">Belongs to the G-protein coupled receptor 1 family.</text>
</comment>
<reference key="1">
    <citation type="journal article" date="1993" name="Mol. Pharmacol.">
        <title>Cloning and characterization of a truncated dopamine D1 receptor from goldfish retina: stimulation of cyclic AMP production and calcium mobilization.</title>
        <authorList>
            <person name="Frail D.E."/>
            <person name="Manelli A.M."/>
            <person name="Witte D.G."/>
            <person name="Lin C.W."/>
            <person name="Steffey M.E."/>
            <person name="MacKenzie R.G."/>
        </authorList>
    </citation>
    <scope>NUCLEOTIDE SEQUENCE</scope>
    <source>
        <tissue>Retina</tissue>
    </source>
</reference>
<evidence type="ECO:0000250" key="1"/>
<evidence type="ECO:0000250" key="2">
    <source>
        <dbReference type="UniProtKB" id="P21728"/>
    </source>
</evidence>
<evidence type="ECO:0000255" key="3"/>
<evidence type="ECO:0000255" key="4">
    <source>
        <dbReference type="PROSITE-ProRule" id="PRU00521"/>
    </source>
</evidence>
<sequence>MAVLDLNLTTVIDSGFMESDRSVRVLTGCFLSVLILSTLLGNTLVCAAVTKFRHLRSKVTNFFVISLAVSDLLVAVLVMPWKAVTEVAGFWPFGAFCDIWVAFDIMCSTASILNLCVISVDRYWAISSPFRYERKMTPRVAFVMISGAWTLSVLISFIPVQLKWHKAQPIGFLEVNASRRDLPTDNCDSSLNRTYAISSSLISFYIPVAIMIVTYTQIYRIAQKQIRRISALERAAESAQIRHDSMGSGSNMDLESSFKLSFKRETKVLKTLSVIMGVFVCCWLPFFILNCMVPFCKRTSNGLPCISPTTFDVFVWFGWANSSLNPIIYAFNADFRRAFAILLGCQRLCPGSISMETPSLNKN</sequence>
<proteinExistence type="evidence at transcript level"/>
<organism>
    <name type="scientific">Carassius auratus</name>
    <name type="common">Goldfish</name>
    <dbReference type="NCBI Taxonomy" id="7957"/>
    <lineage>
        <taxon>Eukaryota</taxon>
        <taxon>Metazoa</taxon>
        <taxon>Chordata</taxon>
        <taxon>Craniata</taxon>
        <taxon>Vertebrata</taxon>
        <taxon>Euteleostomi</taxon>
        <taxon>Actinopterygii</taxon>
        <taxon>Neopterygii</taxon>
        <taxon>Teleostei</taxon>
        <taxon>Ostariophysi</taxon>
        <taxon>Cypriniformes</taxon>
        <taxon>Cyprinidae</taxon>
        <taxon>Cyprininae</taxon>
        <taxon>Carassius</taxon>
    </lineage>
</organism>
<protein>
    <recommendedName>
        <fullName>D(1) dopamine receptor</fullName>
    </recommendedName>
    <alternativeName>
        <fullName>Dopamine D1 receptor</fullName>
    </alternativeName>
</protein>
<feature type="chain" id="PRO_0000069379" description="D(1) dopamine receptor">
    <location>
        <begin position="1"/>
        <end position="363"/>
    </location>
</feature>
<feature type="topological domain" description="Extracellular" evidence="3">
    <location>
        <begin position="1"/>
        <end position="24"/>
    </location>
</feature>
<feature type="transmembrane region" description="Helical; Name=1" evidence="3">
    <location>
        <begin position="25"/>
        <end position="45"/>
    </location>
</feature>
<feature type="topological domain" description="Cytoplasmic" evidence="3">
    <location>
        <begin position="46"/>
        <end position="61"/>
    </location>
</feature>
<feature type="transmembrane region" description="Helical; Name=2" evidence="3">
    <location>
        <begin position="62"/>
        <end position="81"/>
    </location>
</feature>
<feature type="topological domain" description="Extracellular" evidence="3">
    <location>
        <begin position="82"/>
        <end position="98"/>
    </location>
</feature>
<feature type="transmembrane region" description="Helical; Name=3" evidence="3">
    <location>
        <begin position="99"/>
        <end position="120"/>
    </location>
</feature>
<feature type="topological domain" description="Cytoplasmic" evidence="3">
    <location>
        <begin position="121"/>
        <end position="139"/>
    </location>
</feature>
<feature type="transmembrane region" description="Helical; Name=4" evidence="3">
    <location>
        <begin position="140"/>
        <end position="164"/>
    </location>
</feature>
<feature type="topological domain" description="Extracellular" evidence="3">
    <location>
        <begin position="165"/>
        <end position="194"/>
    </location>
</feature>
<feature type="transmembrane region" description="Helical; Name=5" evidence="3">
    <location>
        <begin position="195"/>
        <end position="219"/>
    </location>
</feature>
<feature type="topological domain" description="Cytoplasmic" evidence="3">
    <location>
        <begin position="220"/>
        <end position="271"/>
    </location>
</feature>
<feature type="transmembrane region" description="Helical; Name=6" evidence="3">
    <location>
        <begin position="272"/>
        <end position="297"/>
    </location>
</feature>
<feature type="topological domain" description="Extracellular" evidence="3">
    <location>
        <begin position="298"/>
        <end position="310"/>
    </location>
</feature>
<feature type="transmembrane region" description="Helical; Name=7" evidence="3">
    <location>
        <begin position="311"/>
        <end position="330"/>
    </location>
</feature>
<feature type="topological domain" description="Cytoplasmic" evidence="3">
    <location>
        <begin position="331"/>
        <end position="363"/>
    </location>
</feature>
<feature type="lipid moiety-binding region" description="S-palmitoyl cysteine" evidence="1">
    <location>
        <position position="345"/>
    </location>
</feature>
<feature type="glycosylation site" description="N-linked (GlcNAc...) asparagine" evidence="3">
    <location>
        <position position="7"/>
    </location>
</feature>
<feature type="disulfide bond" evidence="4">
    <location>
        <begin position="97"/>
        <end position="187"/>
    </location>
</feature>